<dbReference type="EMBL" id="CP000490">
    <property type="protein sequence ID" value="ABL70921.1"/>
    <property type="molecule type" value="Genomic_DNA"/>
</dbReference>
<dbReference type="RefSeq" id="WP_011749112.1">
    <property type="nucleotide sequence ID" value="NC_008687.1"/>
</dbReference>
<dbReference type="SMR" id="A1B5X7"/>
<dbReference type="STRING" id="318586.Pden_2837"/>
<dbReference type="EnsemblBacteria" id="ABL70921">
    <property type="protein sequence ID" value="ABL70921"/>
    <property type="gene ID" value="Pden_2837"/>
</dbReference>
<dbReference type="GeneID" id="93452517"/>
<dbReference type="KEGG" id="pde:Pden_2837"/>
<dbReference type="eggNOG" id="COG1381">
    <property type="taxonomic scope" value="Bacteria"/>
</dbReference>
<dbReference type="HOGENOM" id="CLU_086029_0_0_5"/>
<dbReference type="OrthoDB" id="9804792at2"/>
<dbReference type="Proteomes" id="UP000000361">
    <property type="component" value="Chromosome 2"/>
</dbReference>
<dbReference type="GO" id="GO:0043590">
    <property type="term" value="C:bacterial nucleoid"/>
    <property type="evidence" value="ECO:0007669"/>
    <property type="project" value="TreeGrafter"/>
</dbReference>
<dbReference type="GO" id="GO:0006310">
    <property type="term" value="P:DNA recombination"/>
    <property type="evidence" value="ECO:0007669"/>
    <property type="project" value="UniProtKB-UniRule"/>
</dbReference>
<dbReference type="GO" id="GO:0006302">
    <property type="term" value="P:double-strand break repair"/>
    <property type="evidence" value="ECO:0007669"/>
    <property type="project" value="TreeGrafter"/>
</dbReference>
<dbReference type="Gene3D" id="2.40.50.140">
    <property type="entry name" value="Nucleic acid-binding proteins"/>
    <property type="match status" value="1"/>
</dbReference>
<dbReference type="Gene3D" id="1.20.1440.120">
    <property type="entry name" value="Recombination protein O, C-terminal domain"/>
    <property type="match status" value="1"/>
</dbReference>
<dbReference type="HAMAP" id="MF_00201">
    <property type="entry name" value="RecO"/>
    <property type="match status" value="1"/>
</dbReference>
<dbReference type="InterPro" id="IPR037278">
    <property type="entry name" value="ARFGAP/RecO"/>
</dbReference>
<dbReference type="InterPro" id="IPR022572">
    <property type="entry name" value="DNA_rep/recomb_RecO_N"/>
</dbReference>
<dbReference type="InterPro" id="IPR012340">
    <property type="entry name" value="NA-bd_OB-fold"/>
</dbReference>
<dbReference type="InterPro" id="IPR003717">
    <property type="entry name" value="RecO"/>
</dbReference>
<dbReference type="InterPro" id="IPR042242">
    <property type="entry name" value="RecO_C"/>
</dbReference>
<dbReference type="NCBIfam" id="TIGR00613">
    <property type="entry name" value="reco"/>
    <property type="match status" value="1"/>
</dbReference>
<dbReference type="PANTHER" id="PTHR33991">
    <property type="entry name" value="DNA REPAIR PROTEIN RECO"/>
    <property type="match status" value="1"/>
</dbReference>
<dbReference type="PANTHER" id="PTHR33991:SF1">
    <property type="entry name" value="DNA REPAIR PROTEIN RECO"/>
    <property type="match status" value="1"/>
</dbReference>
<dbReference type="Pfam" id="PF02565">
    <property type="entry name" value="RecO_C"/>
    <property type="match status" value="1"/>
</dbReference>
<dbReference type="Pfam" id="PF11967">
    <property type="entry name" value="RecO_N"/>
    <property type="match status" value="1"/>
</dbReference>
<dbReference type="SUPFAM" id="SSF57863">
    <property type="entry name" value="ArfGap/RecO-like zinc finger"/>
    <property type="match status" value="1"/>
</dbReference>
<dbReference type="SUPFAM" id="SSF50249">
    <property type="entry name" value="Nucleic acid-binding proteins"/>
    <property type="match status" value="1"/>
</dbReference>
<reference key="1">
    <citation type="submission" date="2006-12" db="EMBL/GenBank/DDBJ databases">
        <title>Complete sequence of chromosome 2 of Paracoccus denitrificans PD1222.</title>
        <authorList>
            <person name="Copeland A."/>
            <person name="Lucas S."/>
            <person name="Lapidus A."/>
            <person name="Barry K."/>
            <person name="Detter J.C."/>
            <person name="Glavina del Rio T."/>
            <person name="Hammon N."/>
            <person name="Israni S."/>
            <person name="Dalin E."/>
            <person name="Tice H."/>
            <person name="Pitluck S."/>
            <person name="Munk A.C."/>
            <person name="Brettin T."/>
            <person name="Bruce D."/>
            <person name="Han C."/>
            <person name="Tapia R."/>
            <person name="Gilna P."/>
            <person name="Schmutz J."/>
            <person name="Larimer F."/>
            <person name="Land M."/>
            <person name="Hauser L."/>
            <person name="Kyrpides N."/>
            <person name="Lykidis A."/>
            <person name="Spiro S."/>
            <person name="Richardson D.J."/>
            <person name="Moir J.W.B."/>
            <person name="Ferguson S.J."/>
            <person name="van Spanning R.J.M."/>
            <person name="Richardson P."/>
        </authorList>
    </citation>
    <scope>NUCLEOTIDE SEQUENCE [LARGE SCALE GENOMIC DNA]</scope>
    <source>
        <strain>Pd 1222</strain>
    </source>
</reference>
<evidence type="ECO:0000255" key="1">
    <source>
        <dbReference type="HAMAP-Rule" id="MF_00201"/>
    </source>
</evidence>
<organism>
    <name type="scientific">Paracoccus denitrificans (strain Pd 1222)</name>
    <dbReference type="NCBI Taxonomy" id="318586"/>
    <lineage>
        <taxon>Bacteria</taxon>
        <taxon>Pseudomonadati</taxon>
        <taxon>Pseudomonadota</taxon>
        <taxon>Alphaproteobacteria</taxon>
        <taxon>Rhodobacterales</taxon>
        <taxon>Paracoccaceae</taxon>
        <taxon>Paracoccus</taxon>
    </lineage>
</organism>
<accession>A1B5X7</accession>
<comment type="function">
    <text evidence="1">Involved in DNA repair and RecF pathway recombination.</text>
</comment>
<comment type="similarity">
    <text evidence="1">Belongs to the RecO family.</text>
</comment>
<name>RECO_PARDP</name>
<gene>
    <name evidence="1" type="primary">recO</name>
    <name type="ordered locus">Pden_2837</name>
</gene>
<proteinExistence type="inferred from homology"/>
<protein>
    <recommendedName>
        <fullName evidence="1">DNA repair protein RecO</fullName>
    </recommendedName>
    <alternativeName>
        <fullName evidence="1">Recombination protein O</fullName>
    </alternativeName>
</protein>
<feature type="chain" id="PRO_1000193404" description="DNA repair protein RecO">
    <location>
        <begin position="1"/>
        <end position="242"/>
    </location>
</feature>
<sequence length="242" mass="25540">MEWSGEASVMALQRHGESAVILTVLSRETGLIRGLVPGGASAKRAAMLQPGNRVSLRWRARLEEQLGTFAVEPARARPGLLGSGDALAGVNAVTALLTFALPERDPHPRLADATEALLDLMDAGEGWAEAYLHWEMRLLDELGFGLDLTSCAVTGAREGLAYVSPRSGRAVSAQAAGEWAPRLLPLPAMLGGRGNGGIEDALALTGHFLQVRLAEAHAGKPLPPARARLVARLTASRHASGW</sequence>
<keyword id="KW-0227">DNA damage</keyword>
<keyword id="KW-0233">DNA recombination</keyword>
<keyword id="KW-0234">DNA repair</keyword>
<keyword id="KW-1185">Reference proteome</keyword>